<gene>
    <name evidence="1" type="primary">matP</name>
    <name type="ordered locus">SSPA1654</name>
</gene>
<evidence type="ECO:0000255" key="1">
    <source>
        <dbReference type="HAMAP-Rule" id="MF_01073"/>
    </source>
</evidence>
<reference key="1">
    <citation type="journal article" date="2009" name="BMC Genomics">
        <title>Pseudogene accumulation in the evolutionary histories of Salmonella enterica serovars Paratyphi A and Typhi.</title>
        <authorList>
            <person name="Holt K.E."/>
            <person name="Thomson N.R."/>
            <person name="Wain J."/>
            <person name="Langridge G.C."/>
            <person name="Hasan R."/>
            <person name="Bhutta Z.A."/>
            <person name="Quail M.A."/>
            <person name="Norbertczak H."/>
            <person name="Walker D."/>
            <person name="Simmonds M."/>
            <person name="White B."/>
            <person name="Bason N."/>
            <person name="Mungall K."/>
            <person name="Dougan G."/>
            <person name="Parkhill J."/>
        </authorList>
    </citation>
    <scope>NUCLEOTIDE SEQUENCE [LARGE SCALE GENOMIC DNA]</scope>
    <source>
        <strain>AKU_12601</strain>
    </source>
</reference>
<protein>
    <recommendedName>
        <fullName evidence="1">Macrodomain Ter protein</fullName>
    </recommendedName>
</protein>
<organism>
    <name type="scientific">Salmonella paratyphi A (strain AKU_12601)</name>
    <dbReference type="NCBI Taxonomy" id="554290"/>
    <lineage>
        <taxon>Bacteria</taxon>
        <taxon>Pseudomonadati</taxon>
        <taxon>Pseudomonadota</taxon>
        <taxon>Gammaproteobacteria</taxon>
        <taxon>Enterobacterales</taxon>
        <taxon>Enterobacteriaceae</taxon>
        <taxon>Salmonella</taxon>
    </lineage>
</organism>
<name>MATP_SALPK</name>
<comment type="function">
    <text evidence="1">Required for spatial organization of the terminus region of the chromosome (Ter macrodomain) during the cell cycle. Prevents early segregation of duplicated Ter macrodomains during cell division. Binds specifically to matS, which is a 13 bp signature motif repeated within the Ter macrodomain.</text>
</comment>
<comment type="subunit">
    <text evidence="1">Homodimer.</text>
</comment>
<comment type="subcellular location">
    <subcellularLocation>
        <location evidence="1">Cytoplasm</location>
    </subcellularLocation>
</comment>
<comment type="similarity">
    <text evidence="1">Belongs to the MatP family.</text>
</comment>
<feature type="chain" id="PRO_1000136679" description="Macrodomain Ter protein">
    <location>
        <begin position="1"/>
        <end position="150"/>
    </location>
</feature>
<accession>B5BBL1</accession>
<keyword id="KW-0131">Cell cycle</keyword>
<keyword id="KW-0132">Cell division</keyword>
<keyword id="KW-0963">Cytoplasm</keyword>
<keyword id="KW-0238">DNA-binding</keyword>
<proteinExistence type="inferred from homology"/>
<sequence>MKYQQLENLESGWKWKYLVKKHREGELITRYVEASAAQEAVNLLLALENEPVRVNVWIDRHMNPALLNRMKQTIRARRKRHFNAEHQHTRKKSIDLEFMVWQRLAGLAQRRGKTLSETIVQLIEDAEHKEKYATQMTTLKQDLQALLGKK</sequence>
<dbReference type="EMBL" id="FM200053">
    <property type="protein sequence ID" value="CAR59846.1"/>
    <property type="molecule type" value="Genomic_DNA"/>
</dbReference>
<dbReference type="RefSeq" id="WP_000877172.1">
    <property type="nucleotide sequence ID" value="NC_011147.1"/>
</dbReference>
<dbReference type="SMR" id="B5BBL1"/>
<dbReference type="KEGG" id="sek:SSPA1654"/>
<dbReference type="HOGENOM" id="CLU_142157_0_0_6"/>
<dbReference type="Proteomes" id="UP000001869">
    <property type="component" value="Chromosome"/>
</dbReference>
<dbReference type="GO" id="GO:0005737">
    <property type="term" value="C:cytoplasm"/>
    <property type="evidence" value="ECO:0007669"/>
    <property type="project" value="UniProtKB-SubCell"/>
</dbReference>
<dbReference type="GO" id="GO:0043565">
    <property type="term" value="F:sequence-specific DNA binding"/>
    <property type="evidence" value="ECO:0007669"/>
    <property type="project" value="UniProtKB-UniRule"/>
</dbReference>
<dbReference type="GO" id="GO:0051301">
    <property type="term" value="P:cell division"/>
    <property type="evidence" value="ECO:0007669"/>
    <property type="project" value="UniProtKB-UniRule"/>
</dbReference>
<dbReference type="GO" id="GO:0006355">
    <property type="term" value="P:regulation of DNA-templated transcription"/>
    <property type="evidence" value="ECO:0007669"/>
    <property type="project" value="InterPro"/>
</dbReference>
<dbReference type="Gene3D" id="1.20.1270.380">
    <property type="entry name" value="MatP, N-terminal domain"/>
    <property type="match status" value="1"/>
</dbReference>
<dbReference type="Gene3D" id="1.10.1220.10">
    <property type="entry name" value="Met repressor-like"/>
    <property type="match status" value="1"/>
</dbReference>
<dbReference type="HAMAP" id="MF_01073">
    <property type="entry name" value="MatP"/>
    <property type="match status" value="1"/>
</dbReference>
<dbReference type="InterPro" id="IPR013321">
    <property type="entry name" value="Arc_rbn_hlx_hlx"/>
</dbReference>
<dbReference type="InterPro" id="IPR009390">
    <property type="entry name" value="MatP"/>
</dbReference>
<dbReference type="InterPro" id="IPR035375">
    <property type="entry name" value="MatP_C"/>
</dbReference>
<dbReference type="InterPro" id="IPR035087">
    <property type="entry name" value="MatP_N"/>
</dbReference>
<dbReference type="InterPro" id="IPR038339">
    <property type="entry name" value="MatP_N_sf"/>
</dbReference>
<dbReference type="NCBIfam" id="NF003471">
    <property type="entry name" value="PRK05097.1"/>
    <property type="match status" value="1"/>
</dbReference>
<dbReference type="Pfam" id="PF06303">
    <property type="entry name" value="MatP"/>
    <property type="match status" value="1"/>
</dbReference>
<dbReference type="Pfam" id="PF17414">
    <property type="entry name" value="MatP_C"/>
    <property type="match status" value="1"/>
</dbReference>